<dbReference type="EMBL" id="AE005174">
    <property type="protein sequence ID" value="AAG57694.1"/>
    <property type="molecule type" value="Genomic_DNA"/>
</dbReference>
<dbReference type="EMBL" id="BA000007">
    <property type="protein sequence ID" value="BAB36867.1"/>
    <property type="molecule type" value="Genomic_DNA"/>
</dbReference>
<dbReference type="PIR" id="B85904">
    <property type="entry name" value="B85904"/>
</dbReference>
<dbReference type="PIR" id="D91059">
    <property type="entry name" value="D91059"/>
</dbReference>
<dbReference type="RefSeq" id="NP_311471.1">
    <property type="nucleotide sequence ID" value="NC_002695.1"/>
</dbReference>
<dbReference type="RefSeq" id="WP_000189215.1">
    <property type="nucleotide sequence ID" value="NZ_VOAI01000001.1"/>
</dbReference>
<dbReference type="STRING" id="155864.Z3861"/>
<dbReference type="GeneID" id="914882"/>
<dbReference type="KEGG" id="ece:Z3861"/>
<dbReference type="KEGG" id="ecs:ECs_3444"/>
<dbReference type="PATRIC" id="fig|386585.9.peg.3599"/>
<dbReference type="eggNOG" id="COG1280">
    <property type="taxonomic scope" value="Bacteria"/>
</dbReference>
<dbReference type="HOGENOM" id="CLU_079569_1_2_6"/>
<dbReference type="OMA" id="NPKAWIM"/>
<dbReference type="Proteomes" id="UP000000558">
    <property type="component" value="Chromosome"/>
</dbReference>
<dbReference type="Proteomes" id="UP000002519">
    <property type="component" value="Chromosome"/>
</dbReference>
<dbReference type="GO" id="GO:0005886">
    <property type="term" value="C:plasma membrane"/>
    <property type="evidence" value="ECO:0007669"/>
    <property type="project" value="UniProtKB-SubCell"/>
</dbReference>
<dbReference type="GO" id="GO:0015171">
    <property type="term" value="F:amino acid transmembrane transporter activity"/>
    <property type="evidence" value="ECO:0007669"/>
    <property type="project" value="TreeGrafter"/>
</dbReference>
<dbReference type="GO" id="GO:0033228">
    <property type="term" value="P:cysteine export across plasma membrane"/>
    <property type="evidence" value="ECO:0007669"/>
    <property type="project" value="TreeGrafter"/>
</dbReference>
<dbReference type="InterPro" id="IPR001123">
    <property type="entry name" value="LeuE-type"/>
</dbReference>
<dbReference type="NCBIfam" id="NF007653">
    <property type="entry name" value="PRK10323.1"/>
    <property type="match status" value="1"/>
</dbReference>
<dbReference type="PANTHER" id="PTHR30086">
    <property type="entry name" value="ARGININE EXPORTER PROTEIN ARGO"/>
    <property type="match status" value="1"/>
</dbReference>
<dbReference type="PANTHER" id="PTHR30086:SF20">
    <property type="entry name" value="ARGININE EXPORTER PROTEIN ARGO-RELATED"/>
    <property type="match status" value="1"/>
</dbReference>
<dbReference type="Pfam" id="PF01810">
    <property type="entry name" value="LysE"/>
    <property type="match status" value="1"/>
</dbReference>
<feature type="chain" id="PRO_0000318722" description="Cysteine/O-acetylserine efflux protein">
    <location>
        <begin position="1"/>
        <end position="195"/>
    </location>
</feature>
<feature type="topological domain" description="Periplasmic" evidence="2">
    <location>
        <begin position="1"/>
        <end position="7"/>
    </location>
</feature>
<feature type="transmembrane region" description="Helical" evidence="2">
    <location>
        <begin position="8"/>
        <end position="28"/>
    </location>
</feature>
<feature type="topological domain" description="Cytoplasmic" evidence="2">
    <location>
        <begin position="29"/>
        <end position="46"/>
    </location>
</feature>
<feature type="transmembrane region" description="Helical" evidence="2">
    <location>
        <begin position="47"/>
        <end position="67"/>
    </location>
</feature>
<feature type="topological domain" description="Periplasmic" evidence="2">
    <location>
        <begin position="68"/>
        <end position="69"/>
    </location>
</feature>
<feature type="transmembrane region" description="Helical" evidence="2">
    <location>
        <begin position="70"/>
        <end position="90"/>
    </location>
</feature>
<feature type="topological domain" description="Cytoplasmic" evidence="2">
    <location>
        <begin position="91"/>
        <end position="104"/>
    </location>
</feature>
<feature type="transmembrane region" description="Helical" evidence="2">
    <location>
        <begin position="105"/>
        <end position="125"/>
    </location>
</feature>
<feature type="topological domain" description="Periplasmic" evidence="2">
    <location>
        <begin position="126"/>
        <end position="141"/>
    </location>
</feature>
<feature type="transmembrane region" description="Helical" evidence="2">
    <location>
        <begin position="142"/>
        <end position="162"/>
    </location>
</feature>
<feature type="topological domain" description="Cytoplasmic" evidence="2">
    <location>
        <begin position="163"/>
        <end position="176"/>
    </location>
</feature>
<feature type="transmembrane region" description="Helical" evidence="2">
    <location>
        <begin position="177"/>
        <end position="194"/>
    </location>
</feature>
<feature type="topological domain" description="Periplasmic" evidence="1">
    <location>
        <position position="195"/>
    </location>
</feature>
<organism>
    <name type="scientific">Escherichia coli O157:H7</name>
    <dbReference type="NCBI Taxonomy" id="83334"/>
    <lineage>
        <taxon>Bacteria</taxon>
        <taxon>Pseudomonadati</taxon>
        <taxon>Pseudomonadota</taxon>
        <taxon>Gammaproteobacteria</taxon>
        <taxon>Enterobacterales</taxon>
        <taxon>Enterobacteriaceae</taxon>
        <taxon>Escherichia</taxon>
    </lineage>
</organism>
<reference key="1">
    <citation type="journal article" date="2001" name="Nature">
        <title>Genome sequence of enterohaemorrhagic Escherichia coli O157:H7.</title>
        <authorList>
            <person name="Perna N.T."/>
            <person name="Plunkett G. III"/>
            <person name="Burland V."/>
            <person name="Mau B."/>
            <person name="Glasner J.D."/>
            <person name="Rose D.J."/>
            <person name="Mayhew G.F."/>
            <person name="Evans P.S."/>
            <person name="Gregor J."/>
            <person name="Kirkpatrick H.A."/>
            <person name="Posfai G."/>
            <person name="Hackett J."/>
            <person name="Klink S."/>
            <person name="Boutin A."/>
            <person name="Shao Y."/>
            <person name="Miller L."/>
            <person name="Grotbeck E.J."/>
            <person name="Davis N.W."/>
            <person name="Lim A."/>
            <person name="Dimalanta E.T."/>
            <person name="Potamousis K."/>
            <person name="Apodaca J."/>
            <person name="Anantharaman T.S."/>
            <person name="Lin J."/>
            <person name="Yen G."/>
            <person name="Schwartz D.C."/>
            <person name="Welch R.A."/>
            <person name="Blattner F.R."/>
        </authorList>
    </citation>
    <scope>NUCLEOTIDE SEQUENCE [LARGE SCALE GENOMIC DNA]</scope>
    <source>
        <strain>O157:H7 / EDL933 / ATCC 700927 / EHEC</strain>
    </source>
</reference>
<reference key="2">
    <citation type="journal article" date="2001" name="DNA Res.">
        <title>Complete genome sequence of enterohemorrhagic Escherichia coli O157:H7 and genomic comparison with a laboratory strain K-12.</title>
        <authorList>
            <person name="Hayashi T."/>
            <person name="Makino K."/>
            <person name="Ohnishi M."/>
            <person name="Kurokawa K."/>
            <person name="Ishii K."/>
            <person name="Yokoyama K."/>
            <person name="Han C.-G."/>
            <person name="Ohtsubo E."/>
            <person name="Nakayama K."/>
            <person name="Murata T."/>
            <person name="Tanaka M."/>
            <person name="Tobe T."/>
            <person name="Iida T."/>
            <person name="Takami H."/>
            <person name="Honda T."/>
            <person name="Sasakawa C."/>
            <person name="Ogasawara N."/>
            <person name="Yasunaga T."/>
            <person name="Kuhara S."/>
            <person name="Shiba T."/>
            <person name="Hattori M."/>
            <person name="Shinagawa H."/>
        </authorList>
    </citation>
    <scope>NUCLEOTIDE SEQUENCE [LARGE SCALE GENOMIC DNA]</scope>
    <source>
        <strain>O157:H7 / Sakai / RIMD 0509952 / EHEC</strain>
    </source>
</reference>
<proteinExistence type="inferred from homology"/>
<accession>Q8XA19</accession>
<accession>Q7ABJ3</accession>
<sequence length="195" mass="21301">MTPTLLSAFWTYTLITAMTPGPNNILALSSATTHGFHQSTRVLAGMSLGFLIVMLLCAGISFSLAVIDPAAVHLLSWAGAAYIVWLAWKIATSPTKEDGLQTKPISFWASFALQFVNVKIILYGVTALSTFVLPQTQALSWIVGVSVLLAMIGTFGNVCWALAGHLFQRLFRQYGRQLNIVLALLLIYCAVRIFY</sequence>
<name>EAMB_ECO57</name>
<keyword id="KW-0029">Amino-acid transport</keyword>
<keyword id="KW-0997">Cell inner membrane</keyword>
<keyword id="KW-1003">Cell membrane</keyword>
<keyword id="KW-0472">Membrane</keyword>
<keyword id="KW-1185">Reference proteome</keyword>
<keyword id="KW-0812">Transmembrane</keyword>
<keyword id="KW-1133">Transmembrane helix</keyword>
<keyword id="KW-0813">Transport</keyword>
<protein>
    <recommendedName>
        <fullName evidence="1">Cysteine/O-acetylserine efflux protein</fullName>
    </recommendedName>
</protein>
<gene>
    <name type="primary">eamB</name>
    <name type="ordered locus">Z3861</name>
    <name type="ordered locus">ECs3444</name>
</gene>
<evidence type="ECO:0000250" key="1">
    <source>
        <dbReference type="UniProtKB" id="P38101"/>
    </source>
</evidence>
<evidence type="ECO:0000255" key="2"/>
<evidence type="ECO:0000305" key="3"/>
<comment type="function">
    <text evidence="1">Exporter of O-acetylserine (OAS) and cysteine.</text>
</comment>
<comment type="catalytic activity">
    <reaction evidence="1">
        <text>O-acetyl-L-serine(in) = O-acetyl-L-serine(out)</text>
        <dbReference type="Rhea" id="RHEA:29659"/>
        <dbReference type="ChEBI" id="CHEBI:58340"/>
    </reaction>
    <physiologicalReaction direction="left-to-right" evidence="1">
        <dbReference type="Rhea" id="RHEA:29660"/>
    </physiologicalReaction>
</comment>
<comment type="catalytic activity">
    <reaction evidence="1">
        <text>L-cysteine(in) = L-cysteine(out)</text>
        <dbReference type="Rhea" id="RHEA:29655"/>
        <dbReference type="ChEBI" id="CHEBI:35235"/>
    </reaction>
    <physiologicalReaction direction="left-to-right" evidence="1">
        <dbReference type="Rhea" id="RHEA:29656"/>
    </physiologicalReaction>
</comment>
<comment type="subcellular location">
    <subcellularLocation>
        <location evidence="1">Cell inner membrane</location>
        <topology evidence="2">Multi-pass membrane protein</topology>
    </subcellularLocation>
</comment>
<comment type="similarity">
    <text evidence="3">Belongs to the Rht family.</text>
</comment>